<proteinExistence type="inferred from homology"/>
<organism>
    <name type="scientific">Psychromonas ingrahamii (strain DSM 17664 / CCUG 51855 / 37)</name>
    <dbReference type="NCBI Taxonomy" id="357804"/>
    <lineage>
        <taxon>Bacteria</taxon>
        <taxon>Pseudomonadati</taxon>
        <taxon>Pseudomonadota</taxon>
        <taxon>Gammaproteobacteria</taxon>
        <taxon>Alteromonadales</taxon>
        <taxon>Psychromonadaceae</taxon>
        <taxon>Psychromonas</taxon>
    </lineage>
</organism>
<evidence type="ECO:0000255" key="1">
    <source>
        <dbReference type="HAMAP-Rule" id="MF_01855"/>
    </source>
</evidence>
<gene>
    <name evidence="1" type="primary">fbp</name>
    <name type="ordered locus">Ping_3555</name>
</gene>
<sequence>MITLGEYIIKKQHESPEATGELSSILGAIRLATKVVNRDINKAGLVDIIGATGVENVQGEVQQKMDLYANDVFKAALEARGEVCGVASEEEDEFVSFNDQRCINSKYVVLMDPLDGSSNIDVNVSVGTIFSIYRRISEPGKPAILEDFLQPGTEQVAAGYVIYGSSTMLVYTTGYGTHGFTCDPSLGTFYLSHENMKIPDNGSIYSINEGNYLKFPQGVKKYLKYCQEIDGPTNRPYTSRYIGSLVSDFHRNLLKGGIYIYPSTASAPKGKLRLLYECNPMAFIMEQAGGRATDGFNRRIMELTPTELHQRVPFFCGSSKMVDKVEAMMEEYSSEEK</sequence>
<reference key="1">
    <citation type="journal article" date="2008" name="BMC Genomics">
        <title>Genomics of an extreme psychrophile, Psychromonas ingrahamii.</title>
        <authorList>
            <person name="Riley M."/>
            <person name="Staley J.T."/>
            <person name="Danchin A."/>
            <person name="Wang T.Z."/>
            <person name="Brettin T.S."/>
            <person name="Hauser L.J."/>
            <person name="Land M.L."/>
            <person name="Thompson L.S."/>
        </authorList>
    </citation>
    <scope>NUCLEOTIDE SEQUENCE [LARGE SCALE GENOMIC DNA]</scope>
    <source>
        <strain>DSM 17664 / CCUG 51855 / 37</strain>
    </source>
</reference>
<keyword id="KW-0119">Carbohydrate metabolism</keyword>
<keyword id="KW-0963">Cytoplasm</keyword>
<keyword id="KW-0378">Hydrolase</keyword>
<keyword id="KW-0460">Magnesium</keyword>
<keyword id="KW-0479">Metal-binding</keyword>
<keyword id="KW-1185">Reference proteome</keyword>
<comment type="catalytic activity">
    <reaction evidence="1">
        <text>beta-D-fructose 1,6-bisphosphate + H2O = beta-D-fructose 6-phosphate + phosphate</text>
        <dbReference type="Rhea" id="RHEA:11064"/>
        <dbReference type="ChEBI" id="CHEBI:15377"/>
        <dbReference type="ChEBI" id="CHEBI:32966"/>
        <dbReference type="ChEBI" id="CHEBI:43474"/>
        <dbReference type="ChEBI" id="CHEBI:57634"/>
        <dbReference type="EC" id="3.1.3.11"/>
    </reaction>
</comment>
<comment type="cofactor">
    <cofactor evidence="1">
        <name>Mg(2+)</name>
        <dbReference type="ChEBI" id="CHEBI:18420"/>
    </cofactor>
    <text evidence="1">Binds 2 magnesium ions per subunit.</text>
</comment>
<comment type="pathway">
    <text evidence="1">Carbohydrate biosynthesis; gluconeogenesis.</text>
</comment>
<comment type="subunit">
    <text evidence="1">Homotetramer.</text>
</comment>
<comment type="subcellular location">
    <subcellularLocation>
        <location evidence="1">Cytoplasm</location>
    </subcellularLocation>
</comment>
<comment type="similarity">
    <text evidence="1">Belongs to the FBPase class 1 family.</text>
</comment>
<name>F16PA_PSYIN</name>
<accession>A1T0H3</accession>
<protein>
    <recommendedName>
        <fullName evidence="1">Fructose-1,6-bisphosphatase class 1</fullName>
        <shortName evidence="1">FBPase class 1</shortName>
        <ecNumber evidence="1">3.1.3.11</ecNumber>
    </recommendedName>
    <alternativeName>
        <fullName evidence="1">D-fructose-1,6-bisphosphate 1-phosphohydrolase class 1</fullName>
    </alternativeName>
</protein>
<dbReference type="EC" id="3.1.3.11" evidence="1"/>
<dbReference type="EMBL" id="CP000510">
    <property type="protein sequence ID" value="ABM05238.1"/>
    <property type="molecule type" value="Genomic_DNA"/>
</dbReference>
<dbReference type="RefSeq" id="WP_011771786.1">
    <property type="nucleotide sequence ID" value="NC_008709.1"/>
</dbReference>
<dbReference type="SMR" id="A1T0H3"/>
<dbReference type="STRING" id="357804.Ping_3555"/>
<dbReference type="KEGG" id="pin:Ping_3555"/>
<dbReference type="eggNOG" id="COG0158">
    <property type="taxonomic scope" value="Bacteria"/>
</dbReference>
<dbReference type="HOGENOM" id="CLU_039977_2_2_6"/>
<dbReference type="OrthoDB" id="9806756at2"/>
<dbReference type="UniPathway" id="UPA00138"/>
<dbReference type="Proteomes" id="UP000000639">
    <property type="component" value="Chromosome"/>
</dbReference>
<dbReference type="GO" id="GO:0005829">
    <property type="term" value="C:cytosol"/>
    <property type="evidence" value="ECO:0007669"/>
    <property type="project" value="TreeGrafter"/>
</dbReference>
<dbReference type="GO" id="GO:0042132">
    <property type="term" value="F:fructose 1,6-bisphosphate 1-phosphatase activity"/>
    <property type="evidence" value="ECO:0007669"/>
    <property type="project" value="UniProtKB-UniRule"/>
</dbReference>
<dbReference type="GO" id="GO:0000287">
    <property type="term" value="F:magnesium ion binding"/>
    <property type="evidence" value="ECO:0007669"/>
    <property type="project" value="UniProtKB-UniRule"/>
</dbReference>
<dbReference type="GO" id="GO:0030388">
    <property type="term" value="P:fructose 1,6-bisphosphate metabolic process"/>
    <property type="evidence" value="ECO:0007669"/>
    <property type="project" value="TreeGrafter"/>
</dbReference>
<dbReference type="GO" id="GO:0006002">
    <property type="term" value="P:fructose 6-phosphate metabolic process"/>
    <property type="evidence" value="ECO:0007669"/>
    <property type="project" value="TreeGrafter"/>
</dbReference>
<dbReference type="GO" id="GO:0006000">
    <property type="term" value="P:fructose metabolic process"/>
    <property type="evidence" value="ECO:0007669"/>
    <property type="project" value="TreeGrafter"/>
</dbReference>
<dbReference type="GO" id="GO:0006094">
    <property type="term" value="P:gluconeogenesis"/>
    <property type="evidence" value="ECO:0007669"/>
    <property type="project" value="UniProtKB-UniRule"/>
</dbReference>
<dbReference type="GO" id="GO:0005986">
    <property type="term" value="P:sucrose biosynthetic process"/>
    <property type="evidence" value="ECO:0007669"/>
    <property type="project" value="TreeGrafter"/>
</dbReference>
<dbReference type="CDD" id="cd00354">
    <property type="entry name" value="FBPase"/>
    <property type="match status" value="1"/>
</dbReference>
<dbReference type="FunFam" id="3.30.540.10:FF:000002">
    <property type="entry name" value="Fructose-1,6-bisphosphatase class 1"/>
    <property type="match status" value="1"/>
</dbReference>
<dbReference type="FunFam" id="3.40.190.80:FF:000001">
    <property type="entry name" value="Fructose-1,6-bisphosphatase class 1"/>
    <property type="match status" value="1"/>
</dbReference>
<dbReference type="Gene3D" id="3.40.190.80">
    <property type="match status" value="1"/>
</dbReference>
<dbReference type="Gene3D" id="3.30.540.10">
    <property type="entry name" value="Fructose-1,6-Bisphosphatase, subunit A, domain 1"/>
    <property type="match status" value="1"/>
</dbReference>
<dbReference type="HAMAP" id="MF_01855">
    <property type="entry name" value="FBPase_class1"/>
    <property type="match status" value="1"/>
</dbReference>
<dbReference type="InterPro" id="IPR044015">
    <property type="entry name" value="FBPase_C_dom"/>
</dbReference>
<dbReference type="InterPro" id="IPR000146">
    <property type="entry name" value="FBPase_class-1"/>
</dbReference>
<dbReference type="InterPro" id="IPR033391">
    <property type="entry name" value="FBPase_N"/>
</dbReference>
<dbReference type="InterPro" id="IPR028343">
    <property type="entry name" value="FBPtase"/>
</dbReference>
<dbReference type="InterPro" id="IPR020548">
    <property type="entry name" value="Fructose_bisphosphatase_AS"/>
</dbReference>
<dbReference type="NCBIfam" id="NF006778">
    <property type="entry name" value="PRK09293.1-1"/>
    <property type="match status" value="1"/>
</dbReference>
<dbReference type="NCBIfam" id="NF006779">
    <property type="entry name" value="PRK09293.1-3"/>
    <property type="match status" value="1"/>
</dbReference>
<dbReference type="PANTHER" id="PTHR11556">
    <property type="entry name" value="FRUCTOSE-1,6-BISPHOSPHATASE-RELATED"/>
    <property type="match status" value="1"/>
</dbReference>
<dbReference type="PANTHER" id="PTHR11556:SF35">
    <property type="entry name" value="SEDOHEPTULOSE-1,7-BISPHOSPHATASE, CHLOROPLASTIC"/>
    <property type="match status" value="1"/>
</dbReference>
<dbReference type="Pfam" id="PF00316">
    <property type="entry name" value="FBPase"/>
    <property type="match status" value="1"/>
</dbReference>
<dbReference type="Pfam" id="PF18913">
    <property type="entry name" value="FBPase_C"/>
    <property type="match status" value="1"/>
</dbReference>
<dbReference type="PIRSF" id="PIRSF500210">
    <property type="entry name" value="FBPtase"/>
    <property type="match status" value="1"/>
</dbReference>
<dbReference type="PIRSF" id="PIRSF000904">
    <property type="entry name" value="FBPtase_SBPase"/>
    <property type="match status" value="1"/>
</dbReference>
<dbReference type="PRINTS" id="PR00115">
    <property type="entry name" value="F16BPHPHTASE"/>
</dbReference>
<dbReference type="SUPFAM" id="SSF56655">
    <property type="entry name" value="Carbohydrate phosphatase"/>
    <property type="match status" value="1"/>
</dbReference>
<dbReference type="PROSITE" id="PS00124">
    <property type="entry name" value="FBPASE"/>
    <property type="match status" value="1"/>
</dbReference>
<feature type="chain" id="PRO_0000364659" description="Fructose-1,6-bisphosphatase class 1">
    <location>
        <begin position="1"/>
        <end position="337"/>
    </location>
</feature>
<feature type="binding site" evidence="1">
    <location>
        <position position="89"/>
    </location>
    <ligand>
        <name>Mg(2+)</name>
        <dbReference type="ChEBI" id="CHEBI:18420"/>
        <label>1</label>
    </ligand>
</feature>
<feature type="binding site" evidence="1">
    <location>
        <position position="112"/>
    </location>
    <ligand>
        <name>Mg(2+)</name>
        <dbReference type="ChEBI" id="CHEBI:18420"/>
        <label>1</label>
    </ligand>
</feature>
<feature type="binding site" evidence="1">
    <location>
        <position position="112"/>
    </location>
    <ligand>
        <name>Mg(2+)</name>
        <dbReference type="ChEBI" id="CHEBI:18420"/>
        <label>2</label>
    </ligand>
</feature>
<feature type="binding site" evidence="1">
    <location>
        <position position="114"/>
    </location>
    <ligand>
        <name>Mg(2+)</name>
        <dbReference type="ChEBI" id="CHEBI:18420"/>
        <label>1</label>
    </ligand>
</feature>
<feature type="binding site" evidence="1">
    <location>
        <begin position="115"/>
        <end position="118"/>
    </location>
    <ligand>
        <name>substrate</name>
    </ligand>
</feature>
<feature type="binding site" evidence="1">
    <location>
        <position position="115"/>
    </location>
    <ligand>
        <name>Mg(2+)</name>
        <dbReference type="ChEBI" id="CHEBI:18420"/>
        <label>2</label>
    </ligand>
</feature>
<feature type="binding site" evidence="1">
    <location>
        <position position="208"/>
    </location>
    <ligand>
        <name>substrate</name>
    </ligand>
</feature>
<feature type="binding site" evidence="1">
    <location>
        <position position="241"/>
    </location>
    <ligand>
        <name>substrate</name>
    </ligand>
</feature>
<feature type="binding site" evidence="1">
    <location>
        <position position="271"/>
    </location>
    <ligand>
        <name>substrate</name>
    </ligand>
</feature>
<feature type="binding site" evidence="1">
    <location>
        <position position="277"/>
    </location>
    <ligand>
        <name>Mg(2+)</name>
        <dbReference type="ChEBI" id="CHEBI:18420"/>
        <label>2</label>
    </ligand>
</feature>